<gene>
    <name evidence="1" type="primary">rps9</name>
    <name type="ordered locus">PF1644</name>
</gene>
<dbReference type="EMBL" id="AE009950">
    <property type="protein sequence ID" value="AAL81768.1"/>
    <property type="molecule type" value="Genomic_DNA"/>
</dbReference>
<dbReference type="RefSeq" id="WP_011012791.1">
    <property type="nucleotide sequence ID" value="NZ_CP023154.1"/>
</dbReference>
<dbReference type="PDB" id="4V4N">
    <property type="method" value="EM"/>
    <property type="resolution" value="9.00 A"/>
    <property type="chains" value="K=1-135"/>
</dbReference>
<dbReference type="PDB" id="4V6U">
    <property type="method" value="EM"/>
    <property type="resolution" value="6.60 A"/>
    <property type="chains" value="AK=1-135"/>
</dbReference>
<dbReference type="PDB" id="5JB3">
    <property type="method" value="EM"/>
    <property type="resolution" value="5.34 A"/>
    <property type="chains" value="K=1-135"/>
</dbReference>
<dbReference type="PDB" id="5JBH">
    <property type="method" value="EM"/>
    <property type="resolution" value="5.34 A"/>
    <property type="chains" value="K=1-135"/>
</dbReference>
<dbReference type="PDBsum" id="4V4N"/>
<dbReference type="PDBsum" id="4V6U"/>
<dbReference type="PDBsum" id="5JB3"/>
<dbReference type="PDBsum" id="5JBH"/>
<dbReference type="EMDB" id="EMD-50611"/>
<dbReference type="EMDB" id="EMD-50612"/>
<dbReference type="EMDB" id="EMD-50613"/>
<dbReference type="EMDB" id="EMD-8149"/>
<dbReference type="SMR" id="Q8U0E7"/>
<dbReference type="STRING" id="186497.PF1644"/>
<dbReference type="PaxDb" id="186497-PF1644"/>
<dbReference type="KEGG" id="pfu:PF1644"/>
<dbReference type="PATRIC" id="fig|186497.12.peg.1710"/>
<dbReference type="eggNOG" id="arCOG04243">
    <property type="taxonomic scope" value="Archaea"/>
</dbReference>
<dbReference type="HOGENOM" id="CLU_046483_4_0_2"/>
<dbReference type="OrthoDB" id="52677at2157"/>
<dbReference type="PhylomeDB" id="Q8U0E7"/>
<dbReference type="Proteomes" id="UP000001013">
    <property type="component" value="Chromosome"/>
</dbReference>
<dbReference type="GO" id="GO:0022627">
    <property type="term" value="C:cytosolic small ribosomal subunit"/>
    <property type="evidence" value="ECO:0007669"/>
    <property type="project" value="TreeGrafter"/>
</dbReference>
<dbReference type="GO" id="GO:0003723">
    <property type="term" value="F:RNA binding"/>
    <property type="evidence" value="ECO:0007669"/>
    <property type="project" value="TreeGrafter"/>
</dbReference>
<dbReference type="GO" id="GO:0003735">
    <property type="term" value="F:structural constituent of ribosome"/>
    <property type="evidence" value="ECO:0007669"/>
    <property type="project" value="InterPro"/>
</dbReference>
<dbReference type="GO" id="GO:0000462">
    <property type="term" value="P:maturation of SSU-rRNA from tricistronic rRNA transcript (SSU-rRNA, 5.8S rRNA, LSU-rRNA)"/>
    <property type="evidence" value="ECO:0007669"/>
    <property type="project" value="TreeGrafter"/>
</dbReference>
<dbReference type="GO" id="GO:0006412">
    <property type="term" value="P:translation"/>
    <property type="evidence" value="ECO:0007669"/>
    <property type="project" value="UniProtKB-UniRule"/>
</dbReference>
<dbReference type="FunFam" id="3.30.230.10:FF:000051">
    <property type="entry name" value="30S ribosomal protein S9"/>
    <property type="match status" value="1"/>
</dbReference>
<dbReference type="Gene3D" id="3.30.230.10">
    <property type="match status" value="1"/>
</dbReference>
<dbReference type="HAMAP" id="MF_00532_A">
    <property type="entry name" value="Ribosomal_uS9_A"/>
    <property type="match status" value="1"/>
</dbReference>
<dbReference type="InterPro" id="IPR020568">
    <property type="entry name" value="Ribosomal_Su5_D2-typ_SF"/>
</dbReference>
<dbReference type="InterPro" id="IPR000754">
    <property type="entry name" value="Ribosomal_uS9"/>
</dbReference>
<dbReference type="InterPro" id="IPR019958">
    <property type="entry name" value="Ribosomal_uS9_archaeal"/>
</dbReference>
<dbReference type="InterPro" id="IPR020574">
    <property type="entry name" value="Ribosomal_uS9_CS"/>
</dbReference>
<dbReference type="InterPro" id="IPR014721">
    <property type="entry name" value="Ribsml_uS5_D2-typ_fold_subgr"/>
</dbReference>
<dbReference type="NCBIfam" id="NF001749">
    <property type="entry name" value="PRK00474.1"/>
    <property type="match status" value="1"/>
</dbReference>
<dbReference type="NCBIfam" id="TIGR03627">
    <property type="entry name" value="uS9_arch"/>
    <property type="match status" value="1"/>
</dbReference>
<dbReference type="PANTHER" id="PTHR21569:SF16">
    <property type="entry name" value="RIBOSOMAL PROTEIN S16"/>
    <property type="match status" value="1"/>
</dbReference>
<dbReference type="PANTHER" id="PTHR21569">
    <property type="entry name" value="RIBOSOMAL PROTEIN S9"/>
    <property type="match status" value="1"/>
</dbReference>
<dbReference type="Pfam" id="PF00380">
    <property type="entry name" value="Ribosomal_S9"/>
    <property type="match status" value="1"/>
</dbReference>
<dbReference type="SUPFAM" id="SSF54211">
    <property type="entry name" value="Ribosomal protein S5 domain 2-like"/>
    <property type="match status" value="1"/>
</dbReference>
<dbReference type="PROSITE" id="PS00360">
    <property type="entry name" value="RIBOSOMAL_S9"/>
    <property type="match status" value="1"/>
</dbReference>
<name>RS9_PYRFU</name>
<reference key="1">
    <citation type="journal article" date="1999" name="Genetics">
        <title>Divergence of the hyperthermophilic archaea Pyrococcus furiosus and P. horikoshii inferred from complete genomic sequences.</title>
        <authorList>
            <person name="Maeder D.L."/>
            <person name="Weiss R.B."/>
            <person name="Dunn D.M."/>
            <person name="Cherry J.L."/>
            <person name="Gonzalez J.M."/>
            <person name="DiRuggiero J."/>
            <person name="Robb F.T."/>
        </authorList>
    </citation>
    <scope>NUCLEOTIDE SEQUENCE [LARGE SCALE GENOMIC DNA]</scope>
    <source>
        <strain>ATCC 43587 / DSM 3638 / JCM 8422 / Vc1</strain>
    </source>
</reference>
<reference evidence="4" key="2">
    <citation type="journal article" date="2013" name="Nucleic Acids Res.">
        <title>Promiscuous behaviour of archaeal ribosomal proteins: implications for eukaryotic ribosome evolution.</title>
        <authorList>
            <person name="Armache J.P."/>
            <person name="Anger A.M."/>
            <person name="Marquez V."/>
            <person name="Franckenberg S."/>
            <person name="Frohlich T."/>
            <person name="Villa E."/>
            <person name="Berninghausen O."/>
            <person name="Thomm M."/>
            <person name="Arnold G.J."/>
            <person name="Beckmann R."/>
            <person name="Wilson D.N."/>
        </authorList>
    </citation>
    <scope>STRUCTURE BY ELECTRON MICROSCOPY (6.60 ANGSTROMS) IN THE 70S RIBOSOME</scope>
    <scope>SUBUNIT</scope>
</reference>
<evidence type="ECO:0000255" key="1">
    <source>
        <dbReference type="HAMAP-Rule" id="MF_00532"/>
    </source>
</evidence>
<evidence type="ECO:0000256" key="2">
    <source>
        <dbReference type="SAM" id="MobiDB-lite"/>
    </source>
</evidence>
<evidence type="ECO:0000269" key="3">
    <source>
    </source>
</evidence>
<evidence type="ECO:0007744" key="4">
    <source>
        <dbReference type="PDB" id="4V6U"/>
    </source>
</evidence>
<sequence>MRIIQTTGKRKTAIARAVIREGKGRVRINGKPVEIIEPEIARFTILEPLILAGEEIWNSVDIDVKVEGGGFMGQAEAARMAIARALVEWTGDMSLKEKFMKYDRTMLVGDPRRTEPHKPNRSTKGPRAKRQKSYR</sequence>
<feature type="chain" id="PRO_0000111471" description="Small ribosomal subunit protein uS9">
    <location>
        <begin position="1"/>
        <end position="135"/>
    </location>
</feature>
<feature type="region of interest" description="Disordered" evidence="2">
    <location>
        <begin position="107"/>
        <end position="135"/>
    </location>
</feature>
<feature type="compositionally biased region" description="Basic and acidic residues" evidence="2">
    <location>
        <begin position="107"/>
        <end position="118"/>
    </location>
</feature>
<feature type="compositionally biased region" description="Basic residues" evidence="2">
    <location>
        <begin position="119"/>
        <end position="135"/>
    </location>
</feature>
<accession>Q8U0E7</accession>
<proteinExistence type="evidence at protein level"/>
<protein>
    <recommendedName>
        <fullName evidence="1">Small ribosomal subunit protein uS9</fullName>
    </recommendedName>
    <alternativeName>
        <fullName>30S ribosomal protein S9</fullName>
    </alternativeName>
</protein>
<organism>
    <name type="scientific">Pyrococcus furiosus (strain ATCC 43587 / DSM 3638 / JCM 8422 / Vc1)</name>
    <dbReference type="NCBI Taxonomy" id="186497"/>
    <lineage>
        <taxon>Archaea</taxon>
        <taxon>Methanobacteriati</taxon>
        <taxon>Methanobacteriota</taxon>
        <taxon>Thermococci</taxon>
        <taxon>Thermococcales</taxon>
        <taxon>Thermococcaceae</taxon>
        <taxon>Pyrococcus</taxon>
    </lineage>
</organism>
<keyword id="KW-0002">3D-structure</keyword>
<keyword id="KW-1185">Reference proteome</keyword>
<keyword id="KW-0687">Ribonucleoprotein</keyword>
<keyword id="KW-0689">Ribosomal protein</keyword>
<comment type="subunit">
    <text evidence="3">Part of the 30S ribosomal subunit.</text>
</comment>
<comment type="similarity">
    <text evidence="1">Belongs to the universal ribosomal protein uS9 family.</text>
</comment>